<evidence type="ECO:0000255" key="1">
    <source>
        <dbReference type="HAMAP-Rule" id="MF_00046"/>
    </source>
</evidence>
<organism>
    <name type="scientific">Parasynechococcus marenigrum (strain WH8102)</name>
    <dbReference type="NCBI Taxonomy" id="84588"/>
    <lineage>
        <taxon>Bacteria</taxon>
        <taxon>Bacillati</taxon>
        <taxon>Cyanobacteriota</taxon>
        <taxon>Cyanophyceae</taxon>
        <taxon>Synechococcales</taxon>
        <taxon>Prochlorococcaceae</taxon>
        <taxon>Parasynechococcus</taxon>
        <taxon>Parasynechococcus marenigrum</taxon>
    </lineage>
</organism>
<gene>
    <name evidence="1" type="primary">murC</name>
    <name type="ordered locus">SYNW0029</name>
</gene>
<name>MURC_PARMW</name>
<sequence length="467" mass="50515">MSRPLERQHPVHFIGVGGIGMSALAKILVDRGHPVSGSDPRVTPTSHQLMQLGVTVVHEQTEATIETLLSNGRRPIVVVSTAIPTSNPELRRARDAGLEIWHRSDLLAALIDQQASIAVAGSHGKTTTSTLTTTLLMEAGEDPTAIIGGIVPCLGSNGHAGHGRLLVAEADESDGSLVKFRPQLGLITNLELDHTDHYDGLDDLINTMRLFADGCDQVLANRDCPILKEHIQPDAWWSVTSANGVDFAALPLQLDGDRCLARFYENGAPVGDFMLPLPGLHNLSNAAGALAACRMEGIPFERLVNGLTALKPPGRRFDLRGTWEGRYIVDDYAHHPSEVKATLAMAQLMVSSGRSPFPSPPQRLLAVFQPHRFSRTQEFLESFASALQNCDSLLLAPVYSAGEEPLKGVCSQTLADRIQELKPDLEIAVADNLDHLTQLVRTRSQREDLVLAMGAGDVNGLWPRLSA</sequence>
<accession>Q7UA71</accession>
<comment type="function">
    <text evidence="1">Cell wall formation.</text>
</comment>
<comment type="catalytic activity">
    <reaction evidence="1">
        <text>UDP-N-acetyl-alpha-D-muramate + L-alanine + ATP = UDP-N-acetyl-alpha-D-muramoyl-L-alanine + ADP + phosphate + H(+)</text>
        <dbReference type="Rhea" id="RHEA:23372"/>
        <dbReference type="ChEBI" id="CHEBI:15378"/>
        <dbReference type="ChEBI" id="CHEBI:30616"/>
        <dbReference type="ChEBI" id="CHEBI:43474"/>
        <dbReference type="ChEBI" id="CHEBI:57972"/>
        <dbReference type="ChEBI" id="CHEBI:70757"/>
        <dbReference type="ChEBI" id="CHEBI:83898"/>
        <dbReference type="ChEBI" id="CHEBI:456216"/>
        <dbReference type="EC" id="6.3.2.8"/>
    </reaction>
</comment>
<comment type="pathway">
    <text evidence="1">Cell wall biogenesis; peptidoglycan biosynthesis.</text>
</comment>
<comment type="subcellular location">
    <subcellularLocation>
        <location evidence="1">Cytoplasm</location>
    </subcellularLocation>
</comment>
<comment type="similarity">
    <text evidence="1">Belongs to the MurCDEF family.</text>
</comment>
<protein>
    <recommendedName>
        <fullName evidence="1">UDP-N-acetylmuramate--L-alanine ligase</fullName>
        <ecNumber evidence="1">6.3.2.8</ecNumber>
    </recommendedName>
    <alternativeName>
        <fullName evidence="1">UDP-N-acetylmuramoyl-L-alanine synthetase</fullName>
    </alternativeName>
</protein>
<dbReference type="EC" id="6.3.2.8" evidence="1"/>
<dbReference type="EMBL" id="BX569689">
    <property type="protein sequence ID" value="CAE06544.1"/>
    <property type="molecule type" value="Genomic_DNA"/>
</dbReference>
<dbReference type="RefSeq" id="WP_011126907.1">
    <property type="nucleotide sequence ID" value="NC_005070.1"/>
</dbReference>
<dbReference type="SMR" id="Q7UA71"/>
<dbReference type="STRING" id="84588.SYNW0029"/>
<dbReference type="KEGG" id="syw:SYNW0029"/>
<dbReference type="eggNOG" id="COG0773">
    <property type="taxonomic scope" value="Bacteria"/>
</dbReference>
<dbReference type="HOGENOM" id="CLU_028104_2_2_3"/>
<dbReference type="UniPathway" id="UPA00219"/>
<dbReference type="Proteomes" id="UP000001422">
    <property type="component" value="Chromosome"/>
</dbReference>
<dbReference type="GO" id="GO:0005737">
    <property type="term" value="C:cytoplasm"/>
    <property type="evidence" value="ECO:0007669"/>
    <property type="project" value="UniProtKB-SubCell"/>
</dbReference>
<dbReference type="GO" id="GO:0005524">
    <property type="term" value="F:ATP binding"/>
    <property type="evidence" value="ECO:0007669"/>
    <property type="project" value="UniProtKB-UniRule"/>
</dbReference>
<dbReference type="GO" id="GO:0008763">
    <property type="term" value="F:UDP-N-acetylmuramate-L-alanine ligase activity"/>
    <property type="evidence" value="ECO:0007669"/>
    <property type="project" value="UniProtKB-UniRule"/>
</dbReference>
<dbReference type="GO" id="GO:0051301">
    <property type="term" value="P:cell division"/>
    <property type="evidence" value="ECO:0007669"/>
    <property type="project" value="UniProtKB-KW"/>
</dbReference>
<dbReference type="GO" id="GO:0071555">
    <property type="term" value="P:cell wall organization"/>
    <property type="evidence" value="ECO:0007669"/>
    <property type="project" value="UniProtKB-KW"/>
</dbReference>
<dbReference type="GO" id="GO:0009252">
    <property type="term" value="P:peptidoglycan biosynthetic process"/>
    <property type="evidence" value="ECO:0007669"/>
    <property type="project" value="UniProtKB-UniRule"/>
</dbReference>
<dbReference type="GO" id="GO:0008360">
    <property type="term" value="P:regulation of cell shape"/>
    <property type="evidence" value="ECO:0007669"/>
    <property type="project" value="UniProtKB-KW"/>
</dbReference>
<dbReference type="Gene3D" id="3.90.190.20">
    <property type="entry name" value="Mur ligase, C-terminal domain"/>
    <property type="match status" value="1"/>
</dbReference>
<dbReference type="Gene3D" id="3.40.1190.10">
    <property type="entry name" value="Mur-like, catalytic domain"/>
    <property type="match status" value="1"/>
</dbReference>
<dbReference type="Gene3D" id="3.40.50.720">
    <property type="entry name" value="NAD(P)-binding Rossmann-like Domain"/>
    <property type="match status" value="1"/>
</dbReference>
<dbReference type="HAMAP" id="MF_00046">
    <property type="entry name" value="MurC"/>
    <property type="match status" value="1"/>
</dbReference>
<dbReference type="InterPro" id="IPR036565">
    <property type="entry name" value="Mur-like_cat_sf"/>
</dbReference>
<dbReference type="InterPro" id="IPR004101">
    <property type="entry name" value="Mur_ligase_C"/>
</dbReference>
<dbReference type="InterPro" id="IPR036615">
    <property type="entry name" value="Mur_ligase_C_dom_sf"/>
</dbReference>
<dbReference type="InterPro" id="IPR013221">
    <property type="entry name" value="Mur_ligase_cen"/>
</dbReference>
<dbReference type="InterPro" id="IPR000713">
    <property type="entry name" value="Mur_ligase_N"/>
</dbReference>
<dbReference type="InterPro" id="IPR050061">
    <property type="entry name" value="MurCDEF_pg_biosynth"/>
</dbReference>
<dbReference type="InterPro" id="IPR005758">
    <property type="entry name" value="UDP-N-AcMur_Ala_ligase_MurC"/>
</dbReference>
<dbReference type="NCBIfam" id="TIGR01082">
    <property type="entry name" value="murC"/>
    <property type="match status" value="1"/>
</dbReference>
<dbReference type="PANTHER" id="PTHR43445:SF3">
    <property type="entry name" value="UDP-N-ACETYLMURAMATE--L-ALANINE LIGASE"/>
    <property type="match status" value="1"/>
</dbReference>
<dbReference type="PANTHER" id="PTHR43445">
    <property type="entry name" value="UDP-N-ACETYLMURAMATE--L-ALANINE LIGASE-RELATED"/>
    <property type="match status" value="1"/>
</dbReference>
<dbReference type="Pfam" id="PF01225">
    <property type="entry name" value="Mur_ligase"/>
    <property type="match status" value="1"/>
</dbReference>
<dbReference type="Pfam" id="PF02875">
    <property type="entry name" value="Mur_ligase_C"/>
    <property type="match status" value="1"/>
</dbReference>
<dbReference type="Pfam" id="PF08245">
    <property type="entry name" value="Mur_ligase_M"/>
    <property type="match status" value="1"/>
</dbReference>
<dbReference type="SUPFAM" id="SSF51984">
    <property type="entry name" value="MurCD N-terminal domain"/>
    <property type="match status" value="1"/>
</dbReference>
<dbReference type="SUPFAM" id="SSF53623">
    <property type="entry name" value="MurD-like peptide ligases, catalytic domain"/>
    <property type="match status" value="1"/>
</dbReference>
<dbReference type="SUPFAM" id="SSF53244">
    <property type="entry name" value="MurD-like peptide ligases, peptide-binding domain"/>
    <property type="match status" value="1"/>
</dbReference>
<feature type="chain" id="PRO_0000182175" description="UDP-N-acetylmuramate--L-alanine ligase">
    <location>
        <begin position="1"/>
        <end position="467"/>
    </location>
</feature>
<feature type="binding site" evidence="1">
    <location>
        <begin position="121"/>
        <end position="127"/>
    </location>
    <ligand>
        <name>ATP</name>
        <dbReference type="ChEBI" id="CHEBI:30616"/>
    </ligand>
</feature>
<reference key="1">
    <citation type="journal article" date="2003" name="Nature">
        <title>The genome of a motile marine Synechococcus.</title>
        <authorList>
            <person name="Palenik B."/>
            <person name="Brahamsha B."/>
            <person name="Larimer F.W."/>
            <person name="Land M.L."/>
            <person name="Hauser L."/>
            <person name="Chain P."/>
            <person name="Lamerdin J.E."/>
            <person name="Regala W."/>
            <person name="Allen E.E."/>
            <person name="McCarren J."/>
            <person name="Paulsen I.T."/>
            <person name="Dufresne A."/>
            <person name="Partensky F."/>
            <person name="Webb E.A."/>
            <person name="Waterbury J."/>
        </authorList>
    </citation>
    <scope>NUCLEOTIDE SEQUENCE [LARGE SCALE GENOMIC DNA]</scope>
    <source>
        <strain>WH8102</strain>
    </source>
</reference>
<proteinExistence type="inferred from homology"/>
<keyword id="KW-0067">ATP-binding</keyword>
<keyword id="KW-0131">Cell cycle</keyword>
<keyword id="KW-0132">Cell division</keyword>
<keyword id="KW-0133">Cell shape</keyword>
<keyword id="KW-0961">Cell wall biogenesis/degradation</keyword>
<keyword id="KW-0963">Cytoplasm</keyword>
<keyword id="KW-0436">Ligase</keyword>
<keyword id="KW-0547">Nucleotide-binding</keyword>
<keyword id="KW-0573">Peptidoglycan synthesis</keyword>